<name>Y1595_STRP6</name>
<dbReference type="EMBL" id="CP000003">
    <property type="protein sequence ID" value="AAT87730.1"/>
    <property type="molecule type" value="Genomic_DNA"/>
</dbReference>
<dbReference type="SMR" id="Q5XA33"/>
<dbReference type="KEGG" id="spa:M6_Spy1595"/>
<dbReference type="HOGENOM" id="CLU_1561956_0_0_9"/>
<dbReference type="Proteomes" id="UP000001167">
    <property type="component" value="Chromosome"/>
</dbReference>
<dbReference type="InterPro" id="IPR007489">
    <property type="entry name" value="RocS-like_C"/>
</dbReference>
<dbReference type="Pfam" id="PF04394">
    <property type="entry name" value="DUF536"/>
    <property type="match status" value="1"/>
</dbReference>
<sequence>MVLFLIRIFSDSDKEENMGIEKTVSELADILGVSRQAVNNRVKSLPEEDLDKNEKGVTVVKRSGLVKLEEIYKKTIFDDEPISEETKQRELLEILVDEKNTEITRLYEQLKAKDAQLASKDEQMRVKDVQIAEKDKQLDQQQQLTAKAMADKETLKLELEEAKAEANQARLQVEEVQAEVGPKKGFLTRLFAK</sequence>
<feature type="chain" id="PRO_0000259999" description="Uncharacterized protein Spy1595">
    <location>
        <begin position="1"/>
        <end position="193"/>
    </location>
</feature>
<feature type="coiled-coil region" evidence="1">
    <location>
        <begin position="86"/>
        <end position="181"/>
    </location>
</feature>
<proteinExistence type="evidence at protein level"/>
<gene>
    <name type="ordered locus">M6_Spy1595</name>
</gene>
<comment type="mass spectrometry"/>
<organism>
    <name type="scientific">Streptococcus pyogenes serotype M6 (strain ATCC BAA-946 / MGAS10394)</name>
    <dbReference type="NCBI Taxonomy" id="286636"/>
    <lineage>
        <taxon>Bacteria</taxon>
        <taxon>Bacillati</taxon>
        <taxon>Bacillota</taxon>
        <taxon>Bacilli</taxon>
        <taxon>Lactobacillales</taxon>
        <taxon>Streptococcaceae</taxon>
        <taxon>Streptococcus</taxon>
    </lineage>
</organism>
<evidence type="ECO:0000255" key="1"/>
<evidence type="ECO:0000269" key="2">
    <source ref="2"/>
</evidence>
<evidence type="ECO:0000305" key="3"/>
<evidence type="ECO:0000312" key="4">
    <source>
        <dbReference type="EMBL" id="AAT87730.1"/>
    </source>
</evidence>
<reference evidence="4" key="1">
    <citation type="journal article" date="2004" name="J. Infect. Dis.">
        <title>Progress toward characterization of the group A Streptococcus metagenome: complete genome sequence of a macrolide-resistant serotype M6 strain.</title>
        <authorList>
            <person name="Banks D.J."/>
            <person name="Porcella S.F."/>
            <person name="Barbian K.D."/>
            <person name="Beres S.B."/>
            <person name="Philips L.E."/>
            <person name="Voyich J.M."/>
            <person name="DeLeo F.R."/>
            <person name="Martin J.M."/>
            <person name="Somerville G.A."/>
            <person name="Musser J.M."/>
        </authorList>
    </citation>
    <scope>NUCLEOTIDE SEQUENCE [LARGE SCALE GENOMIC DNA]</scope>
    <source>
        <strain>ATCC BAA-946 / MGAS10394</strain>
    </source>
</reference>
<reference evidence="3" key="2">
    <citation type="submission" date="2000-05" db="UniProtKB">
        <title>Two-dimensional gel electrophoresis map of Streptococcus pyogenes proteins.</title>
        <authorList>
            <person name="Hogan D.A."/>
            <person name="Du P."/>
            <person name="Stevenson T.I."/>
            <person name="Whitton M."/>
            <person name="Kilby G.W."/>
            <person name="Rogers J."/>
            <person name="VanBogelen R.A."/>
        </authorList>
    </citation>
    <scope>PROTEIN SEQUENCE OF 23-35; 44-55; 75-87; 90-99 AND 171-183</scope>
    <scope>MASS SPECTROMETRY</scope>
    <source>
        <strain evidence="2">JRS4 / Serotype M6</strain>
    </source>
</reference>
<protein>
    <recommendedName>
        <fullName>Uncharacterized protein Spy1595</fullName>
    </recommendedName>
</protein>
<keyword id="KW-0175">Coiled coil</keyword>
<keyword id="KW-0903">Direct protein sequencing</keyword>
<accession>Q5XA33</accession>
<accession>P82584</accession>